<comment type="function">
    <text evidence="1">S-adenosyl-L-methionine-dependent methyltransferase which specifically dimethylates mitochondrial 12S rRNA at the conserved stem loop. Also required for basal transcription of mitochondrial DNA, probably via its interaction with POLRMT and TFAM. Stimulates transcription independently of the methyltransferase activity (By similarity).</text>
</comment>
<comment type="subunit">
    <text evidence="1">Interacts with mitochondrial RNA polymerase POLRMT. Interacts with TFAM (By similarity).</text>
</comment>
<comment type="subcellular location">
    <subcellularLocation>
        <location evidence="1">Mitochondrion</location>
    </subcellularLocation>
</comment>
<comment type="similarity">
    <text evidence="3">Belongs to the class I-like SAM-binding methyltransferase superfamily. rRNA adenine N(6)-methyltransferase family. KsgA subfamily.</text>
</comment>
<organism>
    <name type="scientific">Rattus norvegicus</name>
    <name type="common">Rat</name>
    <dbReference type="NCBI Taxonomy" id="10116"/>
    <lineage>
        <taxon>Eukaryota</taxon>
        <taxon>Metazoa</taxon>
        <taxon>Chordata</taxon>
        <taxon>Craniata</taxon>
        <taxon>Vertebrata</taxon>
        <taxon>Euteleostomi</taxon>
        <taxon>Mammalia</taxon>
        <taxon>Eutheria</taxon>
        <taxon>Euarchontoglires</taxon>
        <taxon>Glires</taxon>
        <taxon>Rodentia</taxon>
        <taxon>Myomorpha</taxon>
        <taxon>Muroidea</taxon>
        <taxon>Muridae</taxon>
        <taxon>Murinae</taxon>
        <taxon>Rattus</taxon>
    </lineage>
</organism>
<keyword id="KW-0238">DNA-binding</keyword>
<keyword id="KW-0489">Methyltransferase</keyword>
<keyword id="KW-0496">Mitochondrion</keyword>
<keyword id="KW-1185">Reference proteome</keyword>
<keyword id="KW-0694">RNA-binding</keyword>
<keyword id="KW-0698">rRNA processing</keyword>
<keyword id="KW-0949">S-adenosyl-L-methionine</keyword>
<keyword id="KW-0804">Transcription</keyword>
<keyword id="KW-0805">Transcription regulation</keyword>
<keyword id="KW-0808">Transferase</keyword>
<keyword id="KW-0809">Transit peptide</keyword>
<feature type="transit peptide" description="Mitochondrion" evidence="2">
    <location>
        <begin position="1"/>
        <end position="27"/>
    </location>
</feature>
<feature type="chain" id="PRO_0000273175" description="Dimethyladenosine transferase 1, mitochondrial">
    <location>
        <begin position="28"/>
        <end position="345"/>
    </location>
</feature>
<feature type="binding site" evidence="1">
    <location>
        <begin position="35"/>
        <end position="38"/>
    </location>
    <ligand>
        <name>S-adenosyl-L-methionine</name>
        <dbReference type="ChEBI" id="CHEBI:59789"/>
    </ligand>
</feature>
<feature type="binding site" evidence="3">
    <location>
        <position position="36"/>
    </location>
    <ligand>
        <name>S-adenosyl-L-methionine</name>
        <dbReference type="ChEBI" id="CHEBI:59789"/>
    </ligand>
</feature>
<feature type="binding site" evidence="3">
    <location>
        <position position="38"/>
    </location>
    <ligand>
        <name>S-adenosyl-L-methionine</name>
        <dbReference type="ChEBI" id="CHEBI:59789"/>
    </ligand>
</feature>
<feature type="binding site" evidence="3">
    <location>
        <position position="63"/>
    </location>
    <ligand>
        <name>S-adenosyl-L-methionine</name>
        <dbReference type="ChEBI" id="CHEBI:59789"/>
    </ligand>
</feature>
<feature type="binding site" evidence="3">
    <location>
        <position position="85"/>
    </location>
    <ligand>
        <name>S-adenosyl-L-methionine</name>
        <dbReference type="ChEBI" id="CHEBI:59789"/>
    </ligand>
</feature>
<feature type="binding site" evidence="3">
    <location>
        <position position="111"/>
    </location>
    <ligand>
        <name>S-adenosyl-L-methionine</name>
        <dbReference type="ChEBI" id="CHEBI:59789"/>
    </ligand>
</feature>
<feature type="binding site" evidence="3">
    <location>
        <position position="141"/>
    </location>
    <ligand>
        <name>S-adenosyl-L-methionine</name>
        <dbReference type="ChEBI" id="CHEBI:59789"/>
    </ligand>
</feature>
<feature type="sequence conflict" description="In Ref. 2; AAH70907." evidence="4" ref="2">
    <original>W</original>
    <variation>C</variation>
    <location>
        <position position="343"/>
    </location>
</feature>
<gene>
    <name type="primary">Tfb1m</name>
</gene>
<name>TFB1M_RAT</name>
<proteinExistence type="evidence at transcript level"/>
<sequence length="345" mass="39181">MAASGKLGTFRLPPLPTIREIIKLFGLRAAKQLSQNFLLDLRLTDKIVRKAGSLADVYVYEVGPGPGGITRSILNADIAELLVVEKDTRFIPGLQMLSDAAPGKLRIVHGDVLTYKIEKAFPDNIRRQWEDDPPNVHIIGNLPFSVSTPLIIKWLENISLKNGPFVYGRTKMTLTFQKEVAERLVATTGSKQRSRLSIMAQYLCNVEHLFTIPGKAFVPKPEVDVGVVHLMPLVQPKIKQPFKLVEKVVQNVFQFRRKYCHRGLGMLFPEAQRLESTGRLLQLADIDPTLRPTHLSLMHFKSLCDVYRKMCDEDPQLFAYNFREELKQKKRKGQEKDGDSESWGF</sequence>
<dbReference type="EC" id="2.1.1.-"/>
<dbReference type="EMBL" id="AY198392">
    <property type="protein sequence ID" value="AAO42744.1"/>
    <property type="molecule type" value="mRNA"/>
</dbReference>
<dbReference type="EMBL" id="BC070907">
    <property type="protein sequence ID" value="AAH70907.1"/>
    <property type="molecule type" value="mRNA"/>
</dbReference>
<dbReference type="RefSeq" id="NP_852139.2">
    <property type="nucleotide sequence ID" value="NM_181474.2"/>
</dbReference>
<dbReference type="SMR" id="Q811P6"/>
<dbReference type="FunCoup" id="Q811P6">
    <property type="interactions" value="172"/>
</dbReference>
<dbReference type="STRING" id="10116.ENSRNOP00000070930"/>
<dbReference type="PhosphoSitePlus" id="Q811P6"/>
<dbReference type="PaxDb" id="10116-ENSRNOP00000022397"/>
<dbReference type="GeneID" id="308140"/>
<dbReference type="KEGG" id="rno:308140"/>
<dbReference type="UCSC" id="RGD:727795">
    <property type="organism name" value="rat"/>
</dbReference>
<dbReference type="AGR" id="RGD:727795"/>
<dbReference type="CTD" id="51106"/>
<dbReference type="RGD" id="727795">
    <property type="gene designation" value="Tfb1m"/>
</dbReference>
<dbReference type="eggNOG" id="KOG0821">
    <property type="taxonomic scope" value="Eukaryota"/>
</dbReference>
<dbReference type="InParanoid" id="Q811P6"/>
<dbReference type="OrthoDB" id="16079at2759"/>
<dbReference type="PhylomeDB" id="Q811P6"/>
<dbReference type="TreeFam" id="TF300798"/>
<dbReference type="PRO" id="PR:Q811P6"/>
<dbReference type="Proteomes" id="UP000002494">
    <property type="component" value="Unplaced"/>
</dbReference>
<dbReference type="GO" id="GO:0005759">
    <property type="term" value="C:mitochondrial matrix"/>
    <property type="evidence" value="ECO:0000318"/>
    <property type="project" value="GO_Central"/>
</dbReference>
<dbReference type="GO" id="GO:0042645">
    <property type="term" value="C:mitochondrial nucleoid"/>
    <property type="evidence" value="ECO:0000266"/>
    <property type="project" value="RGD"/>
</dbReference>
<dbReference type="GO" id="GO:0003677">
    <property type="term" value="F:DNA binding"/>
    <property type="evidence" value="ECO:0007669"/>
    <property type="project" value="UniProtKB-KW"/>
</dbReference>
<dbReference type="GO" id="GO:0034246">
    <property type="term" value="F:mitochondrial transcription factor activity"/>
    <property type="evidence" value="ECO:0000318"/>
    <property type="project" value="GO_Central"/>
</dbReference>
<dbReference type="GO" id="GO:0003723">
    <property type="term" value="F:RNA binding"/>
    <property type="evidence" value="ECO:0007669"/>
    <property type="project" value="UniProtKB-KW"/>
</dbReference>
<dbReference type="GO" id="GO:0000179">
    <property type="term" value="F:rRNA (adenine-N6,N6-)-dimethyltransferase activity"/>
    <property type="evidence" value="ECO:0000250"/>
    <property type="project" value="UniProtKB"/>
</dbReference>
<dbReference type="GO" id="GO:1904047">
    <property type="term" value="F:S-adenosyl-L-methionine binding"/>
    <property type="evidence" value="ECO:0000250"/>
    <property type="project" value="UniProtKB"/>
</dbReference>
<dbReference type="GO" id="GO:0031167">
    <property type="term" value="P:rRNA methylation"/>
    <property type="evidence" value="ECO:0000250"/>
    <property type="project" value="UniProtKB"/>
</dbReference>
<dbReference type="GO" id="GO:0006391">
    <property type="term" value="P:transcription initiation at mitochondrial promoter"/>
    <property type="evidence" value="ECO:0000318"/>
    <property type="project" value="GO_Central"/>
</dbReference>
<dbReference type="CDD" id="cd02440">
    <property type="entry name" value="AdoMet_MTases"/>
    <property type="match status" value="1"/>
</dbReference>
<dbReference type="FunFam" id="1.10.8.100:FF:000004">
    <property type="entry name" value="rRNA adenine N(6)-methyltransferase"/>
    <property type="match status" value="1"/>
</dbReference>
<dbReference type="FunFam" id="3.40.50.150:FF:000109">
    <property type="entry name" value="rRNA adenine N(6)-methyltransferase"/>
    <property type="match status" value="1"/>
</dbReference>
<dbReference type="Gene3D" id="1.10.8.100">
    <property type="entry name" value="Ribosomal RNA adenine dimethylase-like, domain 2"/>
    <property type="match status" value="1"/>
</dbReference>
<dbReference type="Gene3D" id="3.40.50.150">
    <property type="entry name" value="Vaccinia Virus protein VP39"/>
    <property type="match status" value="1"/>
</dbReference>
<dbReference type="InterPro" id="IPR001737">
    <property type="entry name" value="KsgA/Erm"/>
</dbReference>
<dbReference type="InterPro" id="IPR023165">
    <property type="entry name" value="rRNA_Ade_diMease-like_C"/>
</dbReference>
<dbReference type="InterPro" id="IPR020596">
    <property type="entry name" value="rRNA_Ade_Mease_Trfase_CS"/>
</dbReference>
<dbReference type="InterPro" id="IPR020598">
    <property type="entry name" value="rRNA_Ade_methylase_Trfase_N"/>
</dbReference>
<dbReference type="InterPro" id="IPR011530">
    <property type="entry name" value="rRNA_adenine_dimethylase"/>
</dbReference>
<dbReference type="InterPro" id="IPR029063">
    <property type="entry name" value="SAM-dependent_MTases_sf"/>
</dbReference>
<dbReference type="NCBIfam" id="TIGR00755">
    <property type="entry name" value="ksgA"/>
    <property type="match status" value="1"/>
</dbReference>
<dbReference type="PANTHER" id="PTHR11727">
    <property type="entry name" value="DIMETHYLADENOSINE TRANSFERASE"/>
    <property type="match status" value="1"/>
</dbReference>
<dbReference type="PANTHER" id="PTHR11727:SF17">
    <property type="entry name" value="DIMETHYLADENOSINE TRANSFERASE 1, MITOCHONDRIAL"/>
    <property type="match status" value="1"/>
</dbReference>
<dbReference type="Pfam" id="PF00398">
    <property type="entry name" value="RrnaAD"/>
    <property type="match status" value="1"/>
</dbReference>
<dbReference type="SMART" id="SM00650">
    <property type="entry name" value="rADc"/>
    <property type="match status" value="1"/>
</dbReference>
<dbReference type="SUPFAM" id="SSF53335">
    <property type="entry name" value="S-adenosyl-L-methionine-dependent methyltransferases"/>
    <property type="match status" value="1"/>
</dbReference>
<dbReference type="PROSITE" id="PS01131">
    <property type="entry name" value="RRNA_A_DIMETH"/>
    <property type="match status" value="1"/>
</dbReference>
<dbReference type="PROSITE" id="PS51689">
    <property type="entry name" value="SAM_RNA_A_N6_MT"/>
    <property type="match status" value="1"/>
</dbReference>
<evidence type="ECO:0000250" key="1"/>
<evidence type="ECO:0000255" key="2"/>
<evidence type="ECO:0000255" key="3">
    <source>
        <dbReference type="PROSITE-ProRule" id="PRU01026"/>
    </source>
</evidence>
<evidence type="ECO:0000305" key="4"/>
<reference key="1">
    <citation type="submission" date="2002-12" db="EMBL/GenBank/DDBJ databases">
        <authorList>
            <person name="Antinozzi P.A."/>
        </authorList>
    </citation>
    <scope>NUCLEOTIDE SEQUENCE [MRNA]</scope>
    <source>
        <strain>New England Deaconess Hospital</strain>
    </source>
</reference>
<reference key="2">
    <citation type="journal article" date="2004" name="Genome Res.">
        <title>The status, quality, and expansion of the NIH full-length cDNA project: the Mammalian Gene Collection (MGC).</title>
        <authorList>
            <consortium name="The MGC Project Team"/>
        </authorList>
    </citation>
    <scope>NUCLEOTIDE SEQUENCE [LARGE SCALE MRNA]</scope>
    <source>
        <tissue>Heart</tissue>
    </source>
</reference>
<protein>
    <recommendedName>
        <fullName>Dimethyladenosine transferase 1, mitochondrial</fullName>
        <ecNumber>2.1.1.-</ecNumber>
    </recommendedName>
    <alternativeName>
        <fullName>Mitochondrial 12S rRNA dimethylase 1</fullName>
    </alternativeName>
    <alternativeName>
        <fullName>Mitochondrial transcription factor B1</fullName>
        <shortName>mtTFB1</shortName>
    </alternativeName>
    <alternativeName>
        <fullName>S-adenosylmethionine-6-N', N'-adenosyl(rRNA) dimethyltransferase 1</fullName>
    </alternativeName>
</protein>
<accession>Q811P6</accession>
<accession>Q6IRI6</accession>